<organism>
    <name type="scientific">Deinococcus deserti (strain DSM 17065 / CIP 109153 / LMG 22923 / VCD115)</name>
    <dbReference type="NCBI Taxonomy" id="546414"/>
    <lineage>
        <taxon>Bacteria</taxon>
        <taxon>Thermotogati</taxon>
        <taxon>Deinococcota</taxon>
        <taxon>Deinococci</taxon>
        <taxon>Deinococcales</taxon>
        <taxon>Deinococcaceae</taxon>
        <taxon>Deinococcus</taxon>
    </lineage>
</organism>
<reference key="1">
    <citation type="journal article" date="2009" name="PLoS Genet.">
        <title>Alliance of proteomics and genomics to unravel the specificities of Sahara bacterium Deinococcus deserti.</title>
        <authorList>
            <person name="de Groot A."/>
            <person name="Dulermo R."/>
            <person name="Ortet P."/>
            <person name="Blanchard L."/>
            <person name="Guerin P."/>
            <person name="Fernandez B."/>
            <person name="Vacherie B."/>
            <person name="Dossat C."/>
            <person name="Jolivet E."/>
            <person name="Siguier P."/>
            <person name="Chandler M."/>
            <person name="Barakat M."/>
            <person name="Dedieu A."/>
            <person name="Barbe V."/>
            <person name="Heulin T."/>
            <person name="Sommer S."/>
            <person name="Achouak W."/>
            <person name="Armengaud J."/>
        </authorList>
    </citation>
    <scope>NUCLEOTIDE SEQUENCE [LARGE SCALE GENOMIC DNA]</scope>
    <source>
        <strain>DSM 17065 / CIP 109153 / LMG 22923 / VCD115</strain>
    </source>
</reference>
<proteinExistence type="inferred from homology"/>
<sequence>MNIEKVIAREVLDSRGNPTVEAEVHLDSGFVGRAIVPSGASTGTHEALELRDGGSRYMGKGVQQAVRNVEEALGPAIVGLDASEQIAIDAALMAVDGTPNKGKMGGNAILAVSLATSRAAAEELGVPLYRYLGGSNAKTLPVPMMNLINGGAHADNSVDFQEFMVMPIGAPTFREALRYGTETFHSLKKVLSSRGYNTNVGDEGGFAPDLKSNEEALQVLLEAIEKAGYEPGKDIAIALDPAVTELYKDGHYDLESEGRTLSTAEMVDFWADWADRYPIVSIEDGLAEDDWDGWQALTTKIGDRVQLVGDDLFVTNPERLQRGIDTGVGNAILVKVNQIGSLTESMDAIELAKRHHYGTIISHRSGESEDSFIADLAVATNAGQIKTGSASRSDRIAKYNQLLRIEHALGDRAVYLGRKALR</sequence>
<comment type="function">
    <text evidence="1">Catalyzes the reversible conversion of 2-phosphoglycerate (2-PG) into phosphoenolpyruvate (PEP). It is essential for the degradation of carbohydrates via glycolysis.</text>
</comment>
<comment type="catalytic activity">
    <reaction evidence="1">
        <text>(2R)-2-phosphoglycerate = phosphoenolpyruvate + H2O</text>
        <dbReference type="Rhea" id="RHEA:10164"/>
        <dbReference type="ChEBI" id="CHEBI:15377"/>
        <dbReference type="ChEBI" id="CHEBI:58289"/>
        <dbReference type="ChEBI" id="CHEBI:58702"/>
        <dbReference type="EC" id="4.2.1.11"/>
    </reaction>
</comment>
<comment type="cofactor">
    <cofactor evidence="1">
        <name>Mg(2+)</name>
        <dbReference type="ChEBI" id="CHEBI:18420"/>
    </cofactor>
    <text evidence="1">Binds a second Mg(2+) ion via substrate during catalysis.</text>
</comment>
<comment type="pathway">
    <text evidence="1">Carbohydrate degradation; glycolysis; pyruvate from D-glyceraldehyde 3-phosphate: step 4/5.</text>
</comment>
<comment type="subcellular location">
    <subcellularLocation>
        <location evidence="1">Cytoplasm</location>
    </subcellularLocation>
    <subcellularLocation>
        <location evidence="1">Secreted</location>
    </subcellularLocation>
    <subcellularLocation>
        <location evidence="1">Cell surface</location>
    </subcellularLocation>
    <text evidence="1">Fractions of enolase are present in both the cytoplasm and on the cell surface.</text>
</comment>
<comment type="similarity">
    <text evidence="1">Belongs to the enolase family.</text>
</comment>
<accession>C1CXJ3</accession>
<protein>
    <recommendedName>
        <fullName evidence="1">Enolase</fullName>
        <ecNumber evidence="1">4.2.1.11</ecNumber>
    </recommendedName>
    <alternativeName>
        <fullName evidence="1">2-phospho-D-glycerate hydro-lyase</fullName>
    </alternativeName>
    <alternativeName>
        <fullName evidence="1">2-phosphoglycerate dehydratase</fullName>
    </alternativeName>
</protein>
<name>ENO_DEIDV</name>
<feature type="chain" id="PRO_1000205087" description="Enolase">
    <location>
        <begin position="1"/>
        <end position="422"/>
    </location>
</feature>
<feature type="active site" description="Proton donor" evidence="1">
    <location>
        <position position="203"/>
    </location>
</feature>
<feature type="active site" description="Proton acceptor" evidence="1">
    <location>
        <position position="335"/>
    </location>
</feature>
<feature type="binding site" evidence="1">
    <location>
        <position position="161"/>
    </location>
    <ligand>
        <name>(2R)-2-phosphoglycerate</name>
        <dbReference type="ChEBI" id="CHEBI:58289"/>
    </ligand>
</feature>
<feature type="binding site" evidence="1">
    <location>
        <position position="240"/>
    </location>
    <ligand>
        <name>Mg(2+)</name>
        <dbReference type="ChEBI" id="CHEBI:18420"/>
    </ligand>
</feature>
<feature type="binding site" evidence="1">
    <location>
        <position position="283"/>
    </location>
    <ligand>
        <name>Mg(2+)</name>
        <dbReference type="ChEBI" id="CHEBI:18420"/>
    </ligand>
</feature>
<feature type="binding site" evidence="1">
    <location>
        <position position="310"/>
    </location>
    <ligand>
        <name>Mg(2+)</name>
        <dbReference type="ChEBI" id="CHEBI:18420"/>
    </ligand>
</feature>
<feature type="binding site" evidence="1">
    <location>
        <position position="335"/>
    </location>
    <ligand>
        <name>(2R)-2-phosphoglycerate</name>
        <dbReference type="ChEBI" id="CHEBI:58289"/>
    </ligand>
</feature>
<feature type="binding site" evidence="1">
    <location>
        <position position="364"/>
    </location>
    <ligand>
        <name>(2R)-2-phosphoglycerate</name>
        <dbReference type="ChEBI" id="CHEBI:58289"/>
    </ligand>
</feature>
<feature type="binding site" evidence="1">
    <location>
        <position position="365"/>
    </location>
    <ligand>
        <name>(2R)-2-phosphoglycerate</name>
        <dbReference type="ChEBI" id="CHEBI:58289"/>
    </ligand>
</feature>
<feature type="binding site" evidence="1">
    <location>
        <position position="386"/>
    </location>
    <ligand>
        <name>(2R)-2-phosphoglycerate</name>
        <dbReference type="ChEBI" id="CHEBI:58289"/>
    </ligand>
</feature>
<dbReference type="EC" id="4.2.1.11" evidence="1"/>
<dbReference type="EMBL" id="CP001114">
    <property type="protein sequence ID" value="ACO44799.1"/>
    <property type="molecule type" value="Genomic_DNA"/>
</dbReference>
<dbReference type="RefSeq" id="WP_012691922.1">
    <property type="nucleotide sequence ID" value="NC_012526.1"/>
</dbReference>
<dbReference type="SMR" id="C1CXJ3"/>
<dbReference type="STRING" id="546414.Deide_00030"/>
<dbReference type="PaxDb" id="546414-Deide_00030"/>
<dbReference type="KEGG" id="ddr:Deide_00030"/>
<dbReference type="eggNOG" id="COG0148">
    <property type="taxonomic scope" value="Bacteria"/>
</dbReference>
<dbReference type="HOGENOM" id="CLU_031223_2_1_0"/>
<dbReference type="OrthoDB" id="9804716at2"/>
<dbReference type="UniPathway" id="UPA00109">
    <property type="reaction ID" value="UER00187"/>
</dbReference>
<dbReference type="Proteomes" id="UP000002208">
    <property type="component" value="Chromosome"/>
</dbReference>
<dbReference type="GO" id="GO:0009986">
    <property type="term" value="C:cell surface"/>
    <property type="evidence" value="ECO:0007669"/>
    <property type="project" value="UniProtKB-SubCell"/>
</dbReference>
<dbReference type="GO" id="GO:0005576">
    <property type="term" value="C:extracellular region"/>
    <property type="evidence" value="ECO:0007669"/>
    <property type="project" value="UniProtKB-SubCell"/>
</dbReference>
<dbReference type="GO" id="GO:0000015">
    <property type="term" value="C:phosphopyruvate hydratase complex"/>
    <property type="evidence" value="ECO:0007669"/>
    <property type="project" value="InterPro"/>
</dbReference>
<dbReference type="GO" id="GO:0000287">
    <property type="term" value="F:magnesium ion binding"/>
    <property type="evidence" value="ECO:0007669"/>
    <property type="project" value="UniProtKB-UniRule"/>
</dbReference>
<dbReference type="GO" id="GO:0004634">
    <property type="term" value="F:phosphopyruvate hydratase activity"/>
    <property type="evidence" value="ECO:0007669"/>
    <property type="project" value="UniProtKB-UniRule"/>
</dbReference>
<dbReference type="GO" id="GO:0006096">
    <property type="term" value="P:glycolytic process"/>
    <property type="evidence" value="ECO:0007669"/>
    <property type="project" value="UniProtKB-UniRule"/>
</dbReference>
<dbReference type="CDD" id="cd03313">
    <property type="entry name" value="enolase"/>
    <property type="match status" value="1"/>
</dbReference>
<dbReference type="FunFam" id="3.20.20.120:FF:000001">
    <property type="entry name" value="Enolase"/>
    <property type="match status" value="1"/>
</dbReference>
<dbReference type="FunFam" id="3.30.390.10:FF:000001">
    <property type="entry name" value="Enolase"/>
    <property type="match status" value="1"/>
</dbReference>
<dbReference type="Gene3D" id="3.20.20.120">
    <property type="entry name" value="Enolase-like C-terminal domain"/>
    <property type="match status" value="1"/>
</dbReference>
<dbReference type="Gene3D" id="3.30.390.10">
    <property type="entry name" value="Enolase-like, N-terminal domain"/>
    <property type="match status" value="1"/>
</dbReference>
<dbReference type="HAMAP" id="MF_00318">
    <property type="entry name" value="Enolase"/>
    <property type="match status" value="1"/>
</dbReference>
<dbReference type="InterPro" id="IPR000941">
    <property type="entry name" value="Enolase"/>
</dbReference>
<dbReference type="InterPro" id="IPR036849">
    <property type="entry name" value="Enolase-like_C_sf"/>
</dbReference>
<dbReference type="InterPro" id="IPR029017">
    <property type="entry name" value="Enolase-like_N"/>
</dbReference>
<dbReference type="InterPro" id="IPR020810">
    <property type="entry name" value="Enolase_C"/>
</dbReference>
<dbReference type="InterPro" id="IPR020809">
    <property type="entry name" value="Enolase_CS"/>
</dbReference>
<dbReference type="InterPro" id="IPR020811">
    <property type="entry name" value="Enolase_N"/>
</dbReference>
<dbReference type="NCBIfam" id="TIGR01060">
    <property type="entry name" value="eno"/>
    <property type="match status" value="1"/>
</dbReference>
<dbReference type="PANTHER" id="PTHR11902">
    <property type="entry name" value="ENOLASE"/>
    <property type="match status" value="1"/>
</dbReference>
<dbReference type="PANTHER" id="PTHR11902:SF1">
    <property type="entry name" value="ENOLASE"/>
    <property type="match status" value="1"/>
</dbReference>
<dbReference type="Pfam" id="PF00113">
    <property type="entry name" value="Enolase_C"/>
    <property type="match status" value="1"/>
</dbReference>
<dbReference type="Pfam" id="PF03952">
    <property type="entry name" value="Enolase_N"/>
    <property type="match status" value="1"/>
</dbReference>
<dbReference type="PIRSF" id="PIRSF001400">
    <property type="entry name" value="Enolase"/>
    <property type="match status" value="1"/>
</dbReference>
<dbReference type="PRINTS" id="PR00148">
    <property type="entry name" value="ENOLASE"/>
</dbReference>
<dbReference type="SFLD" id="SFLDS00001">
    <property type="entry name" value="Enolase"/>
    <property type="match status" value="1"/>
</dbReference>
<dbReference type="SFLD" id="SFLDF00002">
    <property type="entry name" value="enolase"/>
    <property type="match status" value="1"/>
</dbReference>
<dbReference type="SMART" id="SM01192">
    <property type="entry name" value="Enolase_C"/>
    <property type="match status" value="1"/>
</dbReference>
<dbReference type="SMART" id="SM01193">
    <property type="entry name" value="Enolase_N"/>
    <property type="match status" value="1"/>
</dbReference>
<dbReference type="SUPFAM" id="SSF51604">
    <property type="entry name" value="Enolase C-terminal domain-like"/>
    <property type="match status" value="1"/>
</dbReference>
<dbReference type="SUPFAM" id="SSF54826">
    <property type="entry name" value="Enolase N-terminal domain-like"/>
    <property type="match status" value="1"/>
</dbReference>
<dbReference type="PROSITE" id="PS00164">
    <property type="entry name" value="ENOLASE"/>
    <property type="match status" value="1"/>
</dbReference>
<keyword id="KW-0963">Cytoplasm</keyword>
<keyword id="KW-0324">Glycolysis</keyword>
<keyword id="KW-0456">Lyase</keyword>
<keyword id="KW-0460">Magnesium</keyword>
<keyword id="KW-0479">Metal-binding</keyword>
<keyword id="KW-1185">Reference proteome</keyword>
<keyword id="KW-0964">Secreted</keyword>
<evidence type="ECO:0000255" key="1">
    <source>
        <dbReference type="HAMAP-Rule" id="MF_00318"/>
    </source>
</evidence>
<gene>
    <name evidence="1" type="primary">eno</name>
    <name type="ordered locus">Deide_00030</name>
</gene>